<organism>
    <name type="scientific">Coxiella burnetii (strain CbuK_Q154)</name>
    <name type="common">Coxiella burnetii (strain Q154)</name>
    <dbReference type="NCBI Taxonomy" id="434924"/>
    <lineage>
        <taxon>Bacteria</taxon>
        <taxon>Pseudomonadati</taxon>
        <taxon>Pseudomonadota</taxon>
        <taxon>Gammaproteobacteria</taxon>
        <taxon>Legionellales</taxon>
        <taxon>Coxiellaceae</taxon>
        <taxon>Coxiella</taxon>
    </lineage>
</organism>
<sequence length="119" mass="13443">MPRVKRGVTARARHKKVLTKAKGYYGARSRVFRVAKQAVIKAAQYAYRDRKQRKRQFRALWIVRINAAAREHGLSYSRLINGLMKASVAIDRKNLAELAVYDKAAFGKLAEKAKQALGG</sequence>
<keyword id="KW-0687">Ribonucleoprotein</keyword>
<keyword id="KW-0689">Ribosomal protein</keyword>
<keyword id="KW-0694">RNA-binding</keyword>
<keyword id="KW-0699">rRNA-binding</keyword>
<comment type="function">
    <text evidence="1">Binds directly to 23S ribosomal RNA and is necessary for the in vitro assembly process of the 50S ribosomal subunit. It is not involved in the protein synthesizing functions of that subunit.</text>
</comment>
<comment type="similarity">
    <text evidence="1">Belongs to the bacterial ribosomal protein bL20 family.</text>
</comment>
<gene>
    <name evidence="1" type="primary">rplT</name>
    <name type="ordered locus">CbuK_1187</name>
</gene>
<evidence type="ECO:0000255" key="1">
    <source>
        <dbReference type="HAMAP-Rule" id="MF_00382"/>
    </source>
</evidence>
<evidence type="ECO:0000305" key="2"/>
<dbReference type="EMBL" id="CP001020">
    <property type="protein sequence ID" value="ACJ20377.1"/>
    <property type="molecule type" value="Genomic_DNA"/>
</dbReference>
<dbReference type="RefSeq" id="WP_005770935.1">
    <property type="nucleotide sequence ID" value="NC_011528.1"/>
</dbReference>
<dbReference type="SMR" id="B6J7X8"/>
<dbReference type="KEGG" id="cbc:CbuK_1187"/>
<dbReference type="HOGENOM" id="CLU_123265_0_1_6"/>
<dbReference type="GO" id="GO:1990904">
    <property type="term" value="C:ribonucleoprotein complex"/>
    <property type="evidence" value="ECO:0007669"/>
    <property type="project" value="UniProtKB-KW"/>
</dbReference>
<dbReference type="GO" id="GO:0005840">
    <property type="term" value="C:ribosome"/>
    <property type="evidence" value="ECO:0007669"/>
    <property type="project" value="UniProtKB-KW"/>
</dbReference>
<dbReference type="GO" id="GO:0019843">
    <property type="term" value="F:rRNA binding"/>
    <property type="evidence" value="ECO:0007669"/>
    <property type="project" value="UniProtKB-UniRule"/>
</dbReference>
<dbReference type="GO" id="GO:0003735">
    <property type="term" value="F:structural constituent of ribosome"/>
    <property type="evidence" value="ECO:0007669"/>
    <property type="project" value="InterPro"/>
</dbReference>
<dbReference type="GO" id="GO:0000027">
    <property type="term" value="P:ribosomal large subunit assembly"/>
    <property type="evidence" value="ECO:0007669"/>
    <property type="project" value="UniProtKB-UniRule"/>
</dbReference>
<dbReference type="GO" id="GO:0006412">
    <property type="term" value="P:translation"/>
    <property type="evidence" value="ECO:0007669"/>
    <property type="project" value="InterPro"/>
</dbReference>
<dbReference type="CDD" id="cd07026">
    <property type="entry name" value="Ribosomal_L20"/>
    <property type="match status" value="1"/>
</dbReference>
<dbReference type="FunFam" id="1.10.1900.20:FF:000001">
    <property type="entry name" value="50S ribosomal protein L20"/>
    <property type="match status" value="1"/>
</dbReference>
<dbReference type="Gene3D" id="6.10.160.10">
    <property type="match status" value="1"/>
</dbReference>
<dbReference type="Gene3D" id="1.10.1900.20">
    <property type="entry name" value="Ribosomal protein L20"/>
    <property type="match status" value="1"/>
</dbReference>
<dbReference type="HAMAP" id="MF_00382">
    <property type="entry name" value="Ribosomal_bL20"/>
    <property type="match status" value="1"/>
</dbReference>
<dbReference type="InterPro" id="IPR005813">
    <property type="entry name" value="Ribosomal_bL20"/>
</dbReference>
<dbReference type="InterPro" id="IPR049946">
    <property type="entry name" value="RIBOSOMAL_L20_CS"/>
</dbReference>
<dbReference type="InterPro" id="IPR035566">
    <property type="entry name" value="Ribosomal_protein_bL20_C"/>
</dbReference>
<dbReference type="NCBIfam" id="TIGR01032">
    <property type="entry name" value="rplT_bact"/>
    <property type="match status" value="1"/>
</dbReference>
<dbReference type="PANTHER" id="PTHR10986">
    <property type="entry name" value="39S RIBOSOMAL PROTEIN L20"/>
    <property type="match status" value="1"/>
</dbReference>
<dbReference type="Pfam" id="PF00453">
    <property type="entry name" value="Ribosomal_L20"/>
    <property type="match status" value="1"/>
</dbReference>
<dbReference type="PRINTS" id="PR00062">
    <property type="entry name" value="RIBOSOMALL20"/>
</dbReference>
<dbReference type="SUPFAM" id="SSF74731">
    <property type="entry name" value="Ribosomal protein L20"/>
    <property type="match status" value="1"/>
</dbReference>
<dbReference type="PROSITE" id="PS00937">
    <property type="entry name" value="RIBOSOMAL_L20"/>
    <property type="match status" value="1"/>
</dbReference>
<protein>
    <recommendedName>
        <fullName evidence="1">Large ribosomal subunit protein bL20</fullName>
    </recommendedName>
    <alternativeName>
        <fullName evidence="2">50S ribosomal protein L20</fullName>
    </alternativeName>
</protein>
<name>RL20_COXB1</name>
<feature type="chain" id="PRO_1000122299" description="Large ribosomal subunit protein bL20">
    <location>
        <begin position="1"/>
        <end position="119"/>
    </location>
</feature>
<proteinExistence type="inferred from homology"/>
<accession>B6J7X8</accession>
<reference key="1">
    <citation type="journal article" date="2009" name="Infect. Immun.">
        <title>Comparative genomics reveal extensive transposon-mediated genomic plasticity and diversity among potential effector proteins within the genus Coxiella.</title>
        <authorList>
            <person name="Beare P.A."/>
            <person name="Unsworth N."/>
            <person name="Andoh M."/>
            <person name="Voth D.E."/>
            <person name="Omsland A."/>
            <person name="Gilk S.D."/>
            <person name="Williams K.P."/>
            <person name="Sobral B.W."/>
            <person name="Kupko J.J. III"/>
            <person name="Porcella S.F."/>
            <person name="Samuel J.E."/>
            <person name="Heinzen R.A."/>
        </authorList>
    </citation>
    <scope>NUCLEOTIDE SEQUENCE [LARGE SCALE GENOMIC DNA]</scope>
    <source>
        <strain>CbuK_Q154</strain>
    </source>
</reference>